<reference key="1">
    <citation type="submission" date="2007-11" db="EMBL/GenBank/DDBJ databases">
        <title>The genome sequence of the hyperthermophilic bacterium Thermotoga neapolitana.</title>
        <authorList>
            <person name="Lim S.K."/>
            <person name="Kim J.S."/>
            <person name="Cha S.H."/>
            <person name="Park B.C."/>
            <person name="Lee D.S."/>
            <person name="Tae H.S."/>
            <person name="Kim S.-J."/>
            <person name="Kim J.J."/>
            <person name="Park K.J."/>
            <person name="Lee S.Y."/>
        </authorList>
    </citation>
    <scope>NUCLEOTIDE SEQUENCE [LARGE SCALE GENOMIC DNA]</scope>
    <source>
        <strain>ATCC 49049 / DSM 4359 / NBRC 107923 / NS-E</strain>
    </source>
</reference>
<organism>
    <name type="scientific">Thermotoga neapolitana (strain ATCC 49049 / DSM 4359 / NBRC 107923 / NS-E)</name>
    <dbReference type="NCBI Taxonomy" id="309803"/>
    <lineage>
        <taxon>Bacteria</taxon>
        <taxon>Thermotogati</taxon>
        <taxon>Thermotogota</taxon>
        <taxon>Thermotogae</taxon>
        <taxon>Thermotogales</taxon>
        <taxon>Thermotogaceae</taxon>
        <taxon>Thermotoga</taxon>
    </lineage>
</organism>
<sequence length="209" mass="23184">MKNLVVVDHPLIKHKLTIMRDKNTGPKEFRELLKEITLLLAYEATRHLKCEEVEVETPITKTTGYRINDKDIVVVPILRAGLVMADGILELLPNASVGHIGIYRDPETLRAVEYYAKLPPLDGDKEVFLLDPMLATGVSSVKALDILKENGARKITLVALIAAPEGVEAVEEKHSDVKIYVAALDERLNDHGYIIPGLGDAGDRLFRTK</sequence>
<keyword id="KW-0021">Allosteric enzyme</keyword>
<keyword id="KW-0328">Glycosyltransferase</keyword>
<keyword id="KW-0342">GTP-binding</keyword>
<keyword id="KW-0460">Magnesium</keyword>
<keyword id="KW-0547">Nucleotide-binding</keyword>
<keyword id="KW-0808">Transferase</keyword>
<comment type="function">
    <text evidence="1">Catalyzes the conversion of uracil and 5-phospho-alpha-D-ribose 1-diphosphate (PRPP) to UMP and diphosphate.</text>
</comment>
<comment type="catalytic activity">
    <reaction evidence="1">
        <text>UMP + diphosphate = 5-phospho-alpha-D-ribose 1-diphosphate + uracil</text>
        <dbReference type="Rhea" id="RHEA:13017"/>
        <dbReference type="ChEBI" id="CHEBI:17568"/>
        <dbReference type="ChEBI" id="CHEBI:33019"/>
        <dbReference type="ChEBI" id="CHEBI:57865"/>
        <dbReference type="ChEBI" id="CHEBI:58017"/>
        <dbReference type="EC" id="2.4.2.9"/>
    </reaction>
</comment>
<comment type="cofactor">
    <cofactor evidence="1">
        <name>Mg(2+)</name>
        <dbReference type="ChEBI" id="CHEBI:18420"/>
    </cofactor>
    <text evidence="1">Binds 1 Mg(2+) ion per subunit. The magnesium is bound as Mg-PRPP.</text>
</comment>
<comment type="activity regulation">
    <text evidence="1">Allosterically activated by GTP.</text>
</comment>
<comment type="pathway">
    <text evidence="1">Pyrimidine metabolism; UMP biosynthesis via salvage pathway; UMP from uracil: step 1/1.</text>
</comment>
<comment type="similarity">
    <text evidence="1">Belongs to the UPRTase family.</text>
</comment>
<accession>B9KAQ6</accession>
<protein>
    <recommendedName>
        <fullName evidence="1">Uracil phosphoribosyltransferase</fullName>
        <ecNumber evidence="1">2.4.2.9</ecNumber>
    </recommendedName>
    <alternativeName>
        <fullName evidence="1">UMP pyrophosphorylase</fullName>
    </alternativeName>
    <alternativeName>
        <fullName evidence="1">UPRTase</fullName>
    </alternativeName>
</protein>
<feature type="chain" id="PRO_1000164838" description="Uracil phosphoribosyltransferase">
    <location>
        <begin position="1"/>
        <end position="209"/>
    </location>
</feature>
<feature type="binding site" evidence="1">
    <location>
        <position position="79"/>
    </location>
    <ligand>
        <name>5-phospho-alpha-D-ribose 1-diphosphate</name>
        <dbReference type="ChEBI" id="CHEBI:58017"/>
    </ligand>
</feature>
<feature type="binding site" evidence="1">
    <location>
        <position position="104"/>
    </location>
    <ligand>
        <name>5-phospho-alpha-D-ribose 1-diphosphate</name>
        <dbReference type="ChEBI" id="CHEBI:58017"/>
    </ligand>
</feature>
<feature type="binding site" evidence="1">
    <location>
        <begin position="131"/>
        <end position="139"/>
    </location>
    <ligand>
        <name>5-phospho-alpha-D-ribose 1-diphosphate</name>
        <dbReference type="ChEBI" id="CHEBI:58017"/>
    </ligand>
</feature>
<feature type="binding site" evidence="1">
    <location>
        <position position="194"/>
    </location>
    <ligand>
        <name>uracil</name>
        <dbReference type="ChEBI" id="CHEBI:17568"/>
    </ligand>
</feature>
<feature type="binding site" evidence="1">
    <location>
        <begin position="199"/>
        <end position="201"/>
    </location>
    <ligand>
        <name>uracil</name>
        <dbReference type="ChEBI" id="CHEBI:17568"/>
    </ligand>
</feature>
<feature type="binding site" evidence="1">
    <location>
        <position position="200"/>
    </location>
    <ligand>
        <name>5-phospho-alpha-D-ribose 1-diphosphate</name>
        <dbReference type="ChEBI" id="CHEBI:58017"/>
    </ligand>
</feature>
<proteinExistence type="inferred from homology"/>
<dbReference type="EC" id="2.4.2.9" evidence="1"/>
<dbReference type="EMBL" id="CP000916">
    <property type="protein sequence ID" value="ACM24039.1"/>
    <property type="molecule type" value="Genomic_DNA"/>
</dbReference>
<dbReference type="RefSeq" id="WP_015920275.1">
    <property type="nucleotide sequence ID" value="NC_011978.1"/>
</dbReference>
<dbReference type="SMR" id="B9KAQ6"/>
<dbReference type="STRING" id="309803.CTN_1863"/>
<dbReference type="KEGG" id="tna:CTN_1863"/>
<dbReference type="eggNOG" id="COG0035">
    <property type="taxonomic scope" value="Bacteria"/>
</dbReference>
<dbReference type="HOGENOM" id="CLU_067096_2_2_0"/>
<dbReference type="UniPathway" id="UPA00574">
    <property type="reaction ID" value="UER00636"/>
</dbReference>
<dbReference type="Proteomes" id="UP000000445">
    <property type="component" value="Chromosome"/>
</dbReference>
<dbReference type="GO" id="GO:0005525">
    <property type="term" value="F:GTP binding"/>
    <property type="evidence" value="ECO:0007669"/>
    <property type="project" value="UniProtKB-KW"/>
</dbReference>
<dbReference type="GO" id="GO:0000287">
    <property type="term" value="F:magnesium ion binding"/>
    <property type="evidence" value="ECO:0007669"/>
    <property type="project" value="UniProtKB-UniRule"/>
</dbReference>
<dbReference type="GO" id="GO:0004845">
    <property type="term" value="F:uracil phosphoribosyltransferase activity"/>
    <property type="evidence" value="ECO:0007669"/>
    <property type="project" value="UniProtKB-UniRule"/>
</dbReference>
<dbReference type="GO" id="GO:0044206">
    <property type="term" value="P:UMP salvage"/>
    <property type="evidence" value="ECO:0007669"/>
    <property type="project" value="UniProtKB-UniRule"/>
</dbReference>
<dbReference type="GO" id="GO:0006223">
    <property type="term" value="P:uracil salvage"/>
    <property type="evidence" value="ECO:0007669"/>
    <property type="project" value="InterPro"/>
</dbReference>
<dbReference type="CDD" id="cd06223">
    <property type="entry name" value="PRTases_typeI"/>
    <property type="match status" value="1"/>
</dbReference>
<dbReference type="FunFam" id="3.40.50.2020:FF:000003">
    <property type="entry name" value="Uracil phosphoribosyltransferase"/>
    <property type="match status" value="1"/>
</dbReference>
<dbReference type="Gene3D" id="3.40.50.2020">
    <property type="match status" value="1"/>
</dbReference>
<dbReference type="HAMAP" id="MF_01218_B">
    <property type="entry name" value="Upp_B"/>
    <property type="match status" value="1"/>
</dbReference>
<dbReference type="InterPro" id="IPR000836">
    <property type="entry name" value="PRibTrfase_dom"/>
</dbReference>
<dbReference type="InterPro" id="IPR029057">
    <property type="entry name" value="PRTase-like"/>
</dbReference>
<dbReference type="InterPro" id="IPR034332">
    <property type="entry name" value="Upp_B"/>
</dbReference>
<dbReference type="InterPro" id="IPR050054">
    <property type="entry name" value="UPRTase/APRTase"/>
</dbReference>
<dbReference type="InterPro" id="IPR005765">
    <property type="entry name" value="Ura_phspho_trans"/>
</dbReference>
<dbReference type="NCBIfam" id="NF001097">
    <property type="entry name" value="PRK00129.1"/>
    <property type="match status" value="1"/>
</dbReference>
<dbReference type="NCBIfam" id="TIGR01091">
    <property type="entry name" value="upp"/>
    <property type="match status" value="1"/>
</dbReference>
<dbReference type="PANTHER" id="PTHR32315">
    <property type="entry name" value="ADENINE PHOSPHORIBOSYLTRANSFERASE"/>
    <property type="match status" value="1"/>
</dbReference>
<dbReference type="PANTHER" id="PTHR32315:SF4">
    <property type="entry name" value="URACIL PHOSPHORIBOSYLTRANSFERASE, CHLOROPLASTIC"/>
    <property type="match status" value="1"/>
</dbReference>
<dbReference type="Pfam" id="PF14681">
    <property type="entry name" value="UPRTase"/>
    <property type="match status" value="1"/>
</dbReference>
<dbReference type="SUPFAM" id="SSF53271">
    <property type="entry name" value="PRTase-like"/>
    <property type="match status" value="1"/>
</dbReference>
<name>UPP_THENN</name>
<evidence type="ECO:0000255" key="1">
    <source>
        <dbReference type="HAMAP-Rule" id="MF_01218"/>
    </source>
</evidence>
<gene>
    <name evidence="1" type="primary">upp</name>
    <name type="ordered locus">CTN_1863</name>
</gene>